<comment type="function">
    <text evidence="1">Required for maturation of 30S ribosomal subunits.</text>
</comment>
<comment type="subcellular location">
    <subcellularLocation>
        <location evidence="1">Cytoplasm</location>
    </subcellularLocation>
</comment>
<comment type="similarity">
    <text evidence="1">Belongs to the RimP family.</text>
</comment>
<keyword id="KW-0963">Cytoplasm</keyword>
<keyword id="KW-0690">Ribosome biogenesis</keyword>
<reference key="1">
    <citation type="journal article" date="2008" name="J. Biotechnol.">
        <title>The genome of Xanthomonas campestris pv. campestris B100 and its use for the reconstruction of metabolic pathways involved in xanthan biosynthesis.</title>
        <authorList>
            <person name="Vorhoelter F.-J."/>
            <person name="Schneiker S."/>
            <person name="Goesmann A."/>
            <person name="Krause L."/>
            <person name="Bekel T."/>
            <person name="Kaiser O."/>
            <person name="Linke B."/>
            <person name="Patschkowski T."/>
            <person name="Rueckert C."/>
            <person name="Schmid J."/>
            <person name="Sidhu V.K."/>
            <person name="Sieber V."/>
            <person name="Tauch A."/>
            <person name="Watt S.A."/>
            <person name="Weisshaar B."/>
            <person name="Becker A."/>
            <person name="Niehaus K."/>
            <person name="Puehler A."/>
        </authorList>
    </citation>
    <scope>NUCLEOTIDE SEQUENCE [LARGE SCALE GENOMIC DNA]</scope>
    <source>
        <strain>B100</strain>
    </source>
</reference>
<feature type="chain" id="PRO_1000136805" description="Ribosome maturation factor RimP">
    <location>
        <begin position="1"/>
        <end position="196"/>
    </location>
</feature>
<feature type="region of interest" description="Disordered" evidence="2">
    <location>
        <begin position="164"/>
        <end position="196"/>
    </location>
</feature>
<feature type="compositionally biased region" description="Basic residues" evidence="2">
    <location>
        <begin position="173"/>
        <end position="182"/>
    </location>
</feature>
<name>RIMP_XANCB</name>
<proteinExistence type="inferred from homology"/>
<dbReference type="EMBL" id="AM920689">
    <property type="protein sequence ID" value="CAP50997.1"/>
    <property type="molecule type" value="Genomic_DNA"/>
</dbReference>
<dbReference type="SMR" id="B0RRB2"/>
<dbReference type="KEGG" id="xca:xcc-b100_1647"/>
<dbReference type="HOGENOM" id="CLU_070525_1_1_6"/>
<dbReference type="Proteomes" id="UP000001188">
    <property type="component" value="Chromosome"/>
</dbReference>
<dbReference type="GO" id="GO:0005829">
    <property type="term" value="C:cytosol"/>
    <property type="evidence" value="ECO:0007669"/>
    <property type="project" value="TreeGrafter"/>
</dbReference>
<dbReference type="GO" id="GO:0000028">
    <property type="term" value="P:ribosomal small subunit assembly"/>
    <property type="evidence" value="ECO:0007669"/>
    <property type="project" value="TreeGrafter"/>
</dbReference>
<dbReference type="GO" id="GO:0006412">
    <property type="term" value="P:translation"/>
    <property type="evidence" value="ECO:0007669"/>
    <property type="project" value="TreeGrafter"/>
</dbReference>
<dbReference type="CDD" id="cd01734">
    <property type="entry name" value="YlxS_C"/>
    <property type="match status" value="1"/>
</dbReference>
<dbReference type="FunFam" id="3.30.300.70:FF:000001">
    <property type="entry name" value="Ribosome maturation factor RimP"/>
    <property type="match status" value="1"/>
</dbReference>
<dbReference type="Gene3D" id="2.30.30.180">
    <property type="entry name" value="Ribosome maturation factor RimP, C-terminal domain"/>
    <property type="match status" value="1"/>
</dbReference>
<dbReference type="Gene3D" id="3.30.300.70">
    <property type="entry name" value="RimP-like superfamily, N-terminal"/>
    <property type="match status" value="1"/>
</dbReference>
<dbReference type="HAMAP" id="MF_01077">
    <property type="entry name" value="RimP"/>
    <property type="match status" value="1"/>
</dbReference>
<dbReference type="InterPro" id="IPR003728">
    <property type="entry name" value="Ribosome_maturation_RimP"/>
</dbReference>
<dbReference type="InterPro" id="IPR028998">
    <property type="entry name" value="RimP_C"/>
</dbReference>
<dbReference type="InterPro" id="IPR036847">
    <property type="entry name" value="RimP_C_sf"/>
</dbReference>
<dbReference type="InterPro" id="IPR028989">
    <property type="entry name" value="RimP_N"/>
</dbReference>
<dbReference type="InterPro" id="IPR035956">
    <property type="entry name" value="RimP_N_sf"/>
</dbReference>
<dbReference type="NCBIfam" id="NF000927">
    <property type="entry name" value="PRK00092.1-1"/>
    <property type="match status" value="1"/>
</dbReference>
<dbReference type="NCBIfam" id="NF000931">
    <property type="entry name" value="PRK00092.2-3"/>
    <property type="match status" value="1"/>
</dbReference>
<dbReference type="PANTHER" id="PTHR33867">
    <property type="entry name" value="RIBOSOME MATURATION FACTOR RIMP"/>
    <property type="match status" value="1"/>
</dbReference>
<dbReference type="PANTHER" id="PTHR33867:SF1">
    <property type="entry name" value="RIBOSOME MATURATION FACTOR RIMP"/>
    <property type="match status" value="1"/>
</dbReference>
<dbReference type="Pfam" id="PF17384">
    <property type="entry name" value="DUF150_C"/>
    <property type="match status" value="1"/>
</dbReference>
<dbReference type="Pfam" id="PF02576">
    <property type="entry name" value="RimP_N"/>
    <property type="match status" value="1"/>
</dbReference>
<dbReference type="SUPFAM" id="SSF74942">
    <property type="entry name" value="YhbC-like, C-terminal domain"/>
    <property type="match status" value="1"/>
</dbReference>
<dbReference type="SUPFAM" id="SSF75420">
    <property type="entry name" value="YhbC-like, N-terminal domain"/>
    <property type="match status" value="1"/>
</dbReference>
<gene>
    <name evidence="1" type="primary">rimP</name>
    <name type="ordered locus">xcc-b100_1647</name>
</gene>
<protein>
    <recommendedName>
        <fullName evidence="1">Ribosome maturation factor RimP</fullName>
    </recommendedName>
</protein>
<organism>
    <name type="scientific">Xanthomonas campestris pv. campestris (strain B100)</name>
    <dbReference type="NCBI Taxonomy" id="509169"/>
    <lineage>
        <taxon>Bacteria</taxon>
        <taxon>Pseudomonadati</taxon>
        <taxon>Pseudomonadota</taxon>
        <taxon>Gammaproteobacteria</taxon>
        <taxon>Lysobacterales</taxon>
        <taxon>Lysobacteraceae</taxon>
        <taxon>Xanthomonas</taxon>
    </lineage>
</organism>
<evidence type="ECO:0000255" key="1">
    <source>
        <dbReference type="HAMAP-Rule" id="MF_01077"/>
    </source>
</evidence>
<evidence type="ECO:0000256" key="2">
    <source>
        <dbReference type="SAM" id="MobiDB-lite"/>
    </source>
</evidence>
<sequence length="196" mass="21238">MSEKATEIANLLGPTVESLGLELLGVEYLPAPGGATLRLYIDVPLAEQPDRIINVDDCERVSREVSAQLDVEDPISGNYTLEVSSPGVDRPLFTLDQFARHVGESAKIVLKLAQDGRRRFQGQIVRIDTEAAAVVFSVDGKDVQIGFDNIDKARILPDWVALGLAPQKPNKPGPKKPGHDKKKPSNEPAAGKPRAE</sequence>
<accession>B0RRB2</accession>